<organism>
    <name type="scientific">Emericella nidulans (strain FGSC A4 / ATCC 38163 / CBS 112.46 / NRRL 194 / M139)</name>
    <name type="common">Aspergillus nidulans</name>
    <dbReference type="NCBI Taxonomy" id="227321"/>
    <lineage>
        <taxon>Eukaryota</taxon>
        <taxon>Fungi</taxon>
        <taxon>Dikarya</taxon>
        <taxon>Ascomycota</taxon>
        <taxon>Pezizomycotina</taxon>
        <taxon>Eurotiomycetes</taxon>
        <taxon>Eurotiomycetidae</taxon>
        <taxon>Eurotiales</taxon>
        <taxon>Aspergillaceae</taxon>
        <taxon>Aspergillus</taxon>
        <taxon>Aspergillus subgen. Nidulantes</taxon>
    </lineage>
</organism>
<accession>Q5B6I7</accession>
<accession>C8V6J0</accession>
<feature type="transit peptide" description="Mitochondrion" evidence="2">
    <location>
        <begin position="1"/>
        <end position="41"/>
    </location>
</feature>
<feature type="chain" id="PRO_0000406655" description="MICOS complex subunit mic60">
    <location>
        <begin position="42"/>
        <end position="618"/>
    </location>
</feature>
<feature type="topological domain" description="Mitochondrial matrix" evidence="2">
    <location>
        <begin position="42"/>
        <end position="89"/>
    </location>
</feature>
<feature type="transmembrane region" description="Helical" evidence="2">
    <location>
        <begin position="90"/>
        <end position="110"/>
    </location>
</feature>
<feature type="topological domain" description="Mitochondrial intermembrane" evidence="2">
    <location>
        <begin position="111"/>
        <end position="618"/>
    </location>
</feature>
<feature type="region of interest" description="Disordered" evidence="3">
    <location>
        <begin position="44"/>
        <end position="81"/>
    </location>
</feature>
<feature type="region of interest" description="Disordered" evidence="3">
    <location>
        <begin position="148"/>
        <end position="244"/>
    </location>
</feature>
<feature type="coiled-coil region" evidence="2">
    <location>
        <begin position="289"/>
        <end position="403"/>
    </location>
</feature>
<feature type="compositionally biased region" description="Low complexity" evidence="3">
    <location>
        <begin position="46"/>
        <end position="60"/>
    </location>
</feature>
<feature type="compositionally biased region" description="Low complexity" evidence="3">
    <location>
        <begin position="67"/>
        <end position="81"/>
    </location>
</feature>
<feature type="compositionally biased region" description="Basic and acidic residues" evidence="3">
    <location>
        <begin position="209"/>
        <end position="238"/>
    </location>
</feature>
<comment type="function">
    <text evidence="1">Component of the MICOS complex, a large protein complex of the mitochondrial inner membrane that plays crucial roles in the maintenance of crista junctions, inner membrane architecture, and formation of contact sites to the outer membrane. Plays a role in keeping cristae membranes connected to the inner boundary membrane. Also promotes protein import via the mitochondrial intermembrane space assembly (MIA) pathway (By similarity).</text>
</comment>
<comment type="subunit">
    <text evidence="1">Component of the mitochondrial contact site and cristae organizing system (MICOS) complex.</text>
</comment>
<comment type="subcellular location">
    <subcellularLocation>
        <location evidence="1">Mitochondrion inner membrane</location>
        <topology evidence="1">Single-pass membrane protein</topology>
    </subcellularLocation>
</comment>
<comment type="similarity">
    <text evidence="4">Belongs to the MICOS complex subunit Mic60 family.</text>
</comment>
<evidence type="ECO:0000250" key="1"/>
<evidence type="ECO:0000255" key="2"/>
<evidence type="ECO:0000256" key="3">
    <source>
        <dbReference type="SAM" id="MobiDB-lite"/>
    </source>
</evidence>
<evidence type="ECO:0000305" key="4"/>
<protein>
    <recommendedName>
        <fullName>MICOS complex subunit mic60</fullName>
    </recommendedName>
    <alternativeName>
        <fullName>Mitofilin</fullName>
    </alternativeName>
</protein>
<gene>
    <name type="primary">mic60</name>
    <name type="ORF">AN3843</name>
</gene>
<reference key="1">
    <citation type="journal article" date="2005" name="Nature">
        <title>Sequencing of Aspergillus nidulans and comparative analysis with A. fumigatus and A. oryzae.</title>
        <authorList>
            <person name="Galagan J.E."/>
            <person name="Calvo S.E."/>
            <person name="Cuomo C."/>
            <person name="Ma L.-J."/>
            <person name="Wortman J.R."/>
            <person name="Batzoglou S."/>
            <person name="Lee S.-I."/>
            <person name="Bastuerkmen M."/>
            <person name="Spevak C.C."/>
            <person name="Clutterbuck J."/>
            <person name="Kapitonov V."/>
            <person name="Jurka J."/>
            <person name="Scazzocchio C."/>
            <person name="Farman M.L."/>
            <person name="Butler J."/>
            <person name="Purcell S."/>
            <person name="Harris S."/>
            <person name="Braus G.H."/>
            <person name="Draht O."/>
            <person name="Busch S."/>
            <person name="D'Enfert C."/>
            <person name="Bouchier C."/>
            <person name="Goldman G.H."/>
            <person name="Bell-Pedersen D."/>
            <person name="Griffiths-Jones S."/>
            <person name="Doonan J.H."/>
            <person name="Yu J."/>
            <person name="Vienken K."/>
            <person name="Pain A."/>
            <person name="Freitag M."/>
            <person name="Selker E.U."/>
            <person name="Archer D.B."/>
            <person name="Penalva M.A."/>
            <person name="Oakley B.R."/>
            <person name="Momany M."/>
            <person name="Tanaka T."/>
            <person name="Kumagai T."/>
            <person name="Asai K."/>
            <person name="Machida M."/>
            <person name="Nierman W.C."/>
            <person name="Denning D.W."/>
            <person name="Caddick M.X."/>
            <person name="Hynes M."/>
            <person name="Paoletti M."/>
            <person name="Fischer R."/>
            <person name="Miller B.L."/>
            <person name="Dyer P.S."/>
            <person name="Sachs M.S."/>
            <person name="Osmani S.A."/>
            <person name="Birren B.W."/>
        </authorList>
    </citation>
    <scope>NUCLEOTIDE SEQUENCE [LARGE SCALE GENOMIC DNA]</scope>
    <source>
        <strain>FGSC A4 / ATCC 38163 / CBS 112.46 / NRRL 194 / M139</strain>
    </source>
</reference>
<reference key="2">
    <citation type="journal article" date="2009" name="Fungal Genet. Biol.">
        <title>The 2008 update of the Aspergillus nidulans genome annotation: a community effort.</title>
        <authorList>
            <person name="Wortman J.R."/>
            <person name="Gilsenan J.M."/>
            <person name="Joardar V."/>
            <person name="Deegan J."/>
            <person name="Clutterbuck J."/>
            <person name="Andersen M.R."/>
            <person name="Archer D."/>
            <person name="Bencina M."/>
            <person name="Braus G."/>
            <person name="Coutinho P."/>
            <person name="von Dohren H."/>
            <person name="Doonan J."/>
            <person name="Driessen A.J."/>
            <person name="Durek P."/>
            <person name="Espeso E."/>
            <person name="Fekete E."/>
            <person name="Flipphi M."/>
            <person name="Estrada C.G."/>
            <person name="Geysens S."/>
            <person name="Goldman G."/>
            <person name="de Groot P.W."/>
            <person name="Hansen K."/>
            <person name="Harris S.D."/>
            <person name="Heinekamp T."/>
            <person name="Helmstaedt K."/>
            <person name="Henrissat B."/>
            <person name="Hofmann G."/>
            <person name="Homan T."/>
            <person name="Horio T."/>
            <person name="Horiuchi H."/>
            <person name="James S."/>
            <person name="Jones M."/>
            <person name="Karaffa L."/>
            <person name="Karanyi Z."/>
            <person name="Kato M."/>
            <person name="Keller N."/>
            <person name="Kelly D.E."/>
            <person name="Kiel J.A."/>
            <person name="Kim J.M."/>
            <person name="van der Klei I.J."/>
            <person name="Klis F.M."/>
            <person name="Kovalchuk A."/>
            <person name="Krasevec N."/>
            <person name="Kubicek C.P."/>
            <person name="Liu B."/>
            <person name="Maccabe A."/>
            <person name="Meyer V."/>
            <person name="Mirabito P."/>
            <person name="Miskei M."/>
            <person name="Mos M."/>
            <person name="Mullins J."/>
            <person name="Nelson D.R."/>
            <person name="Nielsen J."/>
            <person name="Oakley B.R."/>
            <person name="Osmani S.A."/>
            <person name="Pakula T."/>
            <person name="Paszewski A."/>
            <person name="Paulsen I."/>
            <person name="Pilsyk S."/>
            <person name="Pocsi I."/>
            <person name="Punt P.J."/>
            <person name="Ram A.F."/>
            <person name="Ren Q."/>
            <person name="Robellet X."/>
            <person name="Robson G."/>
            <person name="Seiboth B."/>
            <person name="van Solingen P."/>
            <person name="Specht T."/>
            <person name="Sun J."/>
            <person name="Taheri-Talesh N."/>
            <person name="Takeshita N."/>
            <person name="Ussery D."/>
            <person name="vanKuyk P.A."/>
            <person name="Visser H."/>
            <person name="van de Vondervoort P.J."/>
            <person name="de Vries R.P."/>
            <person name="Walton J."/>
            <person name="Xiang X."/>
            <person name="Xiong Y."/>
            <person name="Zeng A.P."/>
            <person name="Brandt B.W."/>
            <person name="Cornell M.J."/>
            <person name="van den Hondel C.A."/>
            <person name="Visser J."/>
            <person name="Oliver S.G."/>
            <person name="Turner G."/>
        </authorList>
    </citation>
    <scope>GENOME REANNOTATION</scope>
    <source>
        <strain>FGSC A4 / ATCC 38163 / CBS 112.46 / NRRL 194 / M139</strain>
    </source>
</reference>
<sequence>MLRSSVLQGRHILSSSARPRPAPQWLARAGASSRLAGQRFFADAKSPTPVTPSSATPVPAETAAKSTAGPSATETPTPAPTRKTGRFRKFLIYLILTSGLAYGGGVFLALKSDNFHDFFTEYVPYGEESVLYFEERDFYRRFPNTLRNKNRLSPASRDEGSRVTIPSKSGLSSKEVEETGTDVSQPGPHMSAVTPAKADEATIKPAAAKPEEKTAAVKEAKKQAQEPEKPREEPKQEPKLPGSAPITTLEFANVSEGDEPIVQELVKTFNDIITVISADEDSAKYSKPVAKAKEELQKIGEQILSVRDEARRAAQEEIEKAHATFDESARELIRRFEEVRANDAAQYREEFEAERERLALAYQQKIQTELQRAQEIAEQRLQNELVEQAIELNRKYIHEVKDLVEREREGRLSKLSELTSSVSELETLVTGWREVIDTNLKTQQLQVAVDAVRSALERSTVPRPFVRELVAVKELAGDDPVVEAAIASINPAAYQRGIPSTSQIIERFRRVADEVRKASLLPEDAGIASHAASLVLSKVMFKKDAEAGSDDVESVLLRTENLLEQGNLDDAAREMNSLKGWAKILSKDWLADVRRVLEVKQALEVIETEARLQCLRVE</sequence>
<proteinExistence type="inferred from homology"/>
<keyword id="KW-0175">Coiled coil</keyword>
<keyword id="KW-0472">Membrane</keyword>
<keyword id="KW-0496">Mitochondrion</keyword>
<keyword id="KW-0999">Mitochondrion inner membrane</keyword>
<keyword id="KW-1185">Reference proteome</keyword>
<keyword id="KW-0809">Transit peptide</keyword>
<keyword id="KW-0812">Transmembrane</keyword>
<keyword id="KW-1133">Transmembrane helix</keyword>
<name>MIC60_EMENI</name>
<dbReference type="EMBL" id="AACD01000062">
    <property type="protein sequence ID" value="EAA59108.1"/>
    <property type="molecule type" value="Genomic_DNA"/>
</dbReference>
<dbReference type="EMBL" id="BN001302">
    <property type="protein sequence ID" value="CBF75260.1"/>
    <property type="molecule type" value="Genomic_DNA"/>
</dbReference>
<dbReference type="RefSeq" id="XP_661447.1">
    <property type="nucleotide sequence ID" value="XM_656355.1"/>
</dbReference>
<dbReference type="SMR" id="Q5B6I7"/>
<dbReference type="FunCoup" id="Q5B6I7">
    <property type="interactions" value="175"/>
</dbReference>
<dbReference type="STRING" id="227321.Q5B6I7"/>
<dbReference type="EnsemblFungi" id="CBF75260">
    <property type="protein sequence ID" value="CBF75260"/>
    <property type="gene ID" value="ANIA_03843"/>
</dbReference>
<dbReference type="KEGG" id="ani:ANIA_03843"/>
<dbReference type="VEuPathDB" id="FungiDB:AN3843"/>
<dbReference type="eggNOG" id="KOG1854">
    <property type="taxonomic scope" value="Eukaryota"/>
</dbReference>
<dbReference type="HOGENOM" id="CLU_008024_1_2_1"/>
<dbReference type="InParanoid" id="Q5B6I7"/>
<dbReference type="OMA" id="RLDHQMQ"/>
<dbReference type="OrthoDB" id="10261039at2759"/>
<dbReference type="Proteomes" id="UP000000560">
    <property type="component" value="Chromosome II"/>
</dbReference>
<dbReference type="GO" id="GO:0061617">
    <property type="term" value="C:MICOS complex"/>
    <property type="evidence" value="ECO:0000318"/>
    <property type="project" value="GO_Central"/>
</dbReference>
<dbReference type="GO" id="GO:0042407">
    <property type="term" value="P:cristae formation"/>
    <property type="evidence" value="ECO:0000318"/>
    <property type="project" value="GO_Central"/>
</dbReference>
<dbReference type="InterPro" id="IPR019133">
    <property type="entry name" value="MIC60"/>
</dbReference>
<dbReference type="PANTHER" id="PTHR15415:SF7">
    <property type="entry name" value="MICOS COMPLEX SUBUNIT MIC60"/>
    <property type="match status" value="1"/>
</dbReference>
<dbReference type="PANTHER" id="PTHR15415">
    <property type="entry name" value="MITOFILIN"/>
    <property type="match status" value="1"/>
</dbReference>
<dbReference type="Pfam" id="PF09731">
    <property type="entry name" value="Mitofilin"/>
    <property type="match status" value="2"/>
</dbReference>